<keyword id="KW-0963">Cytoplasm</keyword>
<keyword id="KW-0275">Fatty acid biosynthesis</keyword>
<keyword id="KW-0276">Fatty acid metabolism</keyword>
<keyword id="KW-0413">Isomerase</keyword>
<keyword id="KW-0444">Lipid biosynthesis</keyword>
<keyword id="KW-0443">Lipid metabolism</keyword>
<keyword id="KW-0456">Lyase</keyword>
<reference key="1">
    <citation type="journal article" date="2008" name="BMC Genomics">
        <title>The genome sequence of the fish pathogen Aliivibrio salmonicida strain LFI1238 shows extensive evidence of gene decay.</title>
        <authorList>
            <person name="Hjerde E."/>
            <person name="Lorentzen M.S."/>
            <person name="Holden M.T."/>
            <person name="Seeger K."/>
            <person name="Paulsen S."/>
            <person name="Bason N."/>
            <person name="Churcher C."/>
            <person name="Harris D."/>
            <person name="Norbertczak H."/>
            <person name="Quail M.A."/>
            <person name="Sanders S."/>
            <person name="Thurston S."/>
            <person name="Parkhill J."/>
            <person name="Willassen N.P."/>
            <person name="Thomson N.R."/>
        </authorList>
    </citation>
    <scope>NUCLEOTIDE SEQUENCE [LARGE SCALE GENOMIC DNA]</scope>
    <source>
        <strain>LFI1238</strain>
    </source>
</reference>
<gene>
    <name evidence="1" type="primary">fabA</name>
    <name type="ordered locus">VSAL_I1556</name>
</gene>
<evidence type="ECO:0000255" key="1">
    <source>
        <dbReference type="HAMAP-Rule" id="MF_00405"/>
    </source>
</evidence>
<dbReference type="EC" id="4.2.1.59" evidence="1"/>
<dbReference type="EC" id="5.3.3.14" evidence="1"/>
<dbReference type="EMBL" id="FM178379">
    <property type="protein sequence ID" value="CAQ79241.1"/>
    <property type="molecule type" value="Genomic_DNA"/>
</dbReference>
<dbReference type="RefSeq" id="WP_012550206.1">
    <property type="nucleotide sequence ID" value="NC_011312.1"/>
</dbReference>
<dbReference type="SMR" id="B6ELS3"/>
<dbReference type="KEGG" id="vsa:VSAL_I1556"/>
<dbReference type="eggNOG" id="COG0764">
    <property type="taxonomic scope" value="Bacteria"/>
</dbReference>
<dbReference type="HOGENOM" id="CLU_097925_0_0_6"/>
<dbReference type="UniPathway" id="UPA00094"/>
<dbReference type="Proteomes" id="UP000001730">
    <property type="component" value="Chromosome 1"/>
</dbReference>
<dbReference type="GO" id="GO:0005737">
    <property type="term" value="C:cytoplasm"/>
    <property type="evidence" value="ECO:0007669"/>
    <property type="project" value="UniProtKB-SubCell"/>
</dbReference>
<dbReference type="GO" id="GO:0019171">
    <property type="term" value="F:(3R)-hydroxyacyl-[acyl-carrier-protein] dehydratase activity"/>
    <property type="evidence" value="ECO:0007669"/>
    <property type="project" value="UniProtKB-UniRule"/>
</dbReference>
<dbReference type="GO" id="GO:0034017">
    <property type="term" value="F:trans-2-decenoyl-acyl-carrier-protein isomerase activity"/>
    <property type="evidence" value="ECO:0007669"/>
    <property type="project" value="UniProtKB-UniRule"/>
</dbReference>
<dbReference type="GO" id="GO:0006636">
    <property type="term" value="P:unsaturated fatty acid biosynthetic process"/>
    <property type="evidence" value="ECO:0007669"/>
    <property type="project" value="UniProtKB-UniRule"/>
</dbReference>
<dbReference type="CDD" id="cd01287">
    <property type="entry name" value="FabA"/>
    <property type="match status" value="1"/>
</dbReference>
<dbReference type="FunFam" id="3.10.129.10:FF:000003">
    <property type="entry name" value="3-hydroxydecanoyl-[acyl-carrier-protein] dehydratase"/>
    <property type="match status" value="1"/>
</dbReference>
<dbReference type="Gene3D" id="3.10.129.10">
    <property type="entry name" value="Hotdog Thioesterase"/>
    <property type="match status" value="1"/>
</dbReference>
<dbReference type="HAMAP" id="MF_00405">
    <property type="entry name" value="FabA"/>
    <property type="match status" value="1"/>
</dbReference>
<dbReference type="InterPro" id="IPR010083">
    <property type="entry name" value="FabA"/>
</dbReference>
<dbReference type="InterPro" id="IPR013114">
    <property type="entry name" value="FabA_FabZ"/>
</dbReference>
<dbReference type="InterPro" id="IPR029069">
    <property type="entry name" value="HotDog_dom_sf"/>
</dbReference>
<dbReference type="NCBIfam" id="TIGR01749">
    <property type="entry name" value="fabA"/>
    <property type="match status" value="1"/>
</dbReference>
<dbReference type="NCBIfam" id="NF003509">
    <property type="entry name" value="PRK05174.1"/>
    <property type="match status" value="1"/>
</dbReference>
<dbReference type="PANTHER" id="PTHR30272">
    <property type="entry name" value="3-HYDROXYACYL-[ACYL-CARRIER-PROTEIN] DEHYDRATASE"/>
    <property type="match status" value="1"/>
</dbReference>
<dbReference type="PANTHER" id="PTHR30272:SF8">
    <property type="entry name" value="3-HYDROXYDECANOYL-[ACYL-CARRIER-PROTEIN] DEHYDRATASE"/>
    <property type="match status" value="1"/>
</dbReference>
<dbReference type="Pfam" id="PF07977">
    <property type="entry name" value="FabA"/>
    <property type="match status" value="1"/>
</dbReference>
<dbReference type="SUPFAM" id="SSF54637">
    <property type="entry name" value="Thioesterase/thiol ester dehydrase-isomerase"/>
    <property type="match status" value="1"/>
</dbReference>
<organism>
    <name type="scientific">Aliivibrio salmonicida (strain LFI1238)</name>
    <name type="common">Vibrio salmonicida (strain LFI1238)</name>
    <dbReference type="NCBI Taxonomy" id="316275"/>
    <lineage>
        <taxon>Bacteria</taxon>
        <taxon>Pseudomonadati</taxon>
        <taxon>Pseudomonadota</taxon>
        <taxon>Gammaproteobacteria</taxon>
        <taxon>Vibrionales</taxon>
        <taxon>Vibrionaceae</taxon>
        <taxon>Aliivibrio</taxon>
    </lineage>
</organism>
<proteinExistence type="inferred from homology"/>
<accession>B6ELS3</accession>
<comment type="function">
    <text evidence="1">Necessary for the introduction of cis unsaturation into fatty acids. Catalyzes the dehydration of (3R)-3-hydroxydecanoyl-ACP to E-(2)-decenoyl-ACP and then its isomerization to Z-(3)-decenoyl-ACP. Can catalyze the dehydratase reaction for beta-hydroxyacyl-ACPs with saturated chain lengths up to 16:0, being most active on intermediate chain length.</text>
</comment>
<comment type="catalytic activity">
    <reaction evidence="1">
        <text>a (3R)-hydroxyacyl-[ACP] = a (2E)-enoyl-[ACP] + H2O</text>
        <dbReference type="Rhea" id="RHEA:13097"/>
        <dbReference type="Rhea" id="RHEA-COMP:9925"/>
        <dbReference type="Rhea" id="RHEA-COMP:9945"/>
        <dbReference type="ChEBI" id="CHEBI:15377"/>
        <dbReference type="ChEBI" id="CHEBI:78784"/>
        <dbReference type="ChEBI" id="CHEBI:78827"/>
        <dbReference type="EC" id="4.2.1.59"/>
    </reaction>
</comment>
<comment type="catalytic activity">
    <reaction evidence="1">
        <text>(3R)-hydroxydecanoyl-[ACP] = (2E)-decenoyl-[ACP] + H2O</text>
        <dbReference type="Rhea" id="RHEA:41860"/>
        <dbReference type="Rhea" id="RHEA-COMP:9638"/>
        <dbReference type="Rhea" id="RHEA-COMP:9639"/>
        <dbReference type="ChEBI" id="CHEBI:15377"/>
        <dbReference type="ChEBI" id="CHEBI:78466"/>
        <dbReference type="ChEBI" id="CHEBI:78467"/>
    </reaction>
</comment>
<comment type="catalytic activity">
    <reaction evidence="1">
        <text>(2E)-decenoyl-[ACP] = (3Z)-decenoyl-[ACP]</text>
        <dbReference type="Rhea" id="RHEA:23568"/>
        <dbReference type="Rhea" id="RHEA-COMP:9639"/>
        <dbReference type="Rhea" id="RHEA-COMP:9927"/>
        <dbReference type="ChEBI" id="CHEBI:78467"/>
        <dbReference type="ChEBI" id="CHEBI:78798"/>
        <dbReference type="EC" id="5.3.3.14"/>
    </reaction>
</comment>
<comment type="pathway">
    <text evidence="1">Lipid metabolism; fatty acid biosynthesis.</text>
</comment>
<comment type="subunit">
    <text evidence="1">Homodimer.</text>
</comment>
<comment type="subcellular location">
    <subcellularLocation>
        <location evidence="1">Cytoplasm</location>
    </subcellularLocation>
</comment>
<comment type="similarity">
    <text evidence="1">Belongs to the thioester dehydratase family. FabA subfamily.</text>
</comment>
<feature type="chain" id="PRO_1000201171" description="3-hydroxydecanoyl-[acyl-carrier-protein] dehydratase">
    <location>
        <begin position="1"/>
        <end position="172"/>
    </location>
</feature>
<feature type="active site" evidence="1">
    <location>
        <position position="71"/>
    </location>
</feature>
<sequence length="172" mass="18886">MQNKPSSYDREDLLASSRGELFGPNGPQLPAPNMLMMDRIPLMSETEGLFGKGKVIAELDITPDLWFFDCHFPGDPVMPGCLGLDAMWQLVGFFLGWVGGQGKGRALGVGEVKFTGQVLPTAKKVTYEIDFKRVINRKLVMGLADGRVLVDGKEIYVAKDLKVGLFQDTSAF</sequence>
<name>FABA_ALISL</name>
<protein>
    <recommendedName>
        <fullName evidence="1">3-hydroxydecanoyl-[acyl-carrier-protein] dehydratase</fullName>
        <ecNumber evidence="1">4.2.1.59</ecNumber>
    </recommendedName>
    <alternativeName>
        <fullName evidence="1">3-hydroxyacyl-[acyl-carrier-protein] dehydratase FabA</fullName>
    </alternativeName>
    <alternativeName>
        <fullName evidence="1">Beta-hydroxydecanoyl thioester dehydrase</fullName>
    </alternativeName>
    <alternativeName>
        <fullName evidence="1">Trans-2-decenoyl-[acyl-carrier-protein] isomerase</fullName>
        <ecNumber evidence="1">5.3.3.14</ecNumber>
    </alternativeName>
</protein>